<comment type="function">
    <text>Involved in gametogenesis and steroidogenesis.</text>
</comment>
<comment type="subunit">
    <text>Heterodimer of an alpha and a beta chain.</text>
</comment>
<comment type="subcellular location">
    <subcellularLocation>
        <location>Secreted</location>
    </subcellularLocation>
</comment>
<comment type="similarity">
    <text evidence="3">Belongs to the glycoprotein hormones subunit beta family.</text>
</comment>
<gene>
    <name type="primary">cgba</name>
</gene>
<feature type="signal peptide" evidence="2">
    <location>
        <begin position="1"/>
        <end position="19"/>
    </location>
</feature>
<feature type="chain" id="PRO_0000011691" description="Gonadotropin subunit beta-1">
    <location>
        <begin position="20"/>
        <end position="114"/>
    </location>
</feature>
<feature type="glycosylation site" description="N-linked (GlcNAc...) asparagine" evidence="2">
    <location>
        <position position="24"/>
    </location>
</feature>
<feature type="disulfide bond" evidence="1">
    <location>
        <begin position="20"/>
        <end position="66"/>
    </location>
</feature>
<feature type="disulfide bond" evidence="1">
    <location>
        <begin position="32"/>
        <end position="80"/>
    </location>
</feature>
<feature type="disulfide bond" evidence="1">
    <location>
        <begin position="37"/>
        <end position="114"/>
    </location>
</feature>
<feature type="disulfide bond" evidence="1">
    <location>
        <begin position="43"/>
        <end position="92"/>
    </location>
</feature>
<feature type="disulfide bond" evidence="1">
    <location>
        <begin position="47"/>
        <end position="94"/>
    </location>
</feature>
<feature type="disulfide bond" evidence="1">
    <location>
        <begin position="97"/>
        <end position="104"/>
    </location>
</feature>
<feature type="sequence variant">
    <original>H</original>
    <variation>R</variation>
    <location>
        <position position="21"/>
    </location>
</feature>
<feature type="sequence variant">
    <original>I</original>
    <variation>V</variation>
    <location>
        <position position="77"/>
    </location>
</feature>
<reference key="1">
    <citation type="journal article" date="1992" name="Mol. Cell. Endocrinol.">
        <title>Fundulus heteroclitus gonadotropins. 3. Cloning and sequencing of gonadotropic hormone (GTH) I and II beta-subunits using the polymerase chain reaction.</title>
        <authorList>
            <person name="Lin Y.-W.P."/>
            <person name="Rupnow B.A."/>
            <person name="Price D.A."/>
            <person name="Greenberg R.M."/>
            <person name="Wallace R.A."/>
        </authorList>
    </citation>
    <scope>NUCLEOTIDE SEQUENCE [MRNA]</scope>
    <source>
        <tissue>Pituitary</tissue>
    </source>
</reference>
<keyword id="KW-1015">Disulfide bond</keyword>
<keyword id="KW-0325">Glycoprotein</keyword>
<keyword id="KW-0372">Hormone</keyword>
<keyword id="KW-0964">Secreted</keyword>
<keyword id="KW-0732">Signal</keyword>
<proteinExistence type="inferred from homology"/>
<accession>P30971</accession>
<protein>
    <recommendedName>
        <fullName>Gonadotropin subunit beta-1</fullName>
    </recommendedName>
    <alternativeName>
        <fullName>GTH-I-beta</fullName>
    </alternativeName>
    <alternativeName>
        <fullName>Gonadotropin beta-I chain</fullName>
    </alternativeName>
</protein>
<name>GTHB1_FUNHE</name>
<dbReference type="EMBL" id="M87014">
    <property type="protein sequence ID" value="AAB59962.1"/>
    <property type="molecule type" value="mRNA"/>
</dbReference>
<dbReference type="PIR" id="I50553">
    <property type="entry name" value="I50553"/>
</dbReference>
<dbReference type="RefSeq" id="NP_001296916.1">
    <property type="nucleotide sequence ID" value="NM_001309987.1"/>
</dbReference>
<dbReference type="SMR" id="P30971"/>
<dbReference type="STRING" id="8078.ENSFHEP00000034352"/>
<dbReference type="GlyCosmos" id="P30971">
    <property type="glycosylation" value="1 site, No reported glycans"/>
</dbReference>
<dbReference type="Ensembl" id="ENSFHET00000029508.1">
    <property type="protein sequence ID" value="ENSFHEP00000034352.1"/>
    <property type="gene ID" value="ENSFHEG00000022009.1"/>
</dbReference>
<dbReference type="GeneID" id="105930150"/>
<dbReference type="CTD" id="2488"/>
<dbReference type="GeneTree" id="ENSGT00940000172097"/>
<dbReference type="OrthoDB" id="8903627at2759"/>
<dbReference type="Proteomes" id="UP000265000">
    <property type="component" value="Unplaced"/>
</dbReference>
<dbReference type="GO" id="GO:0005737">
    <property type="term" value="C:cytoplasm"/>
    <property type="evidence" value="ECO:0007669"/>
    <property type="project" value="TreeGrafter"/>
</dbReference>
<dbReference type="GO" id="GO:0005615">
    <property type="term" value="C:extracellular space"/>
    <property type="evidence" value="ECO:0007669"/>
    <property type="project" value="TreeGrafter"/>
</dbReference>
<dbReference type="GO" id="GO:0005179">
    <property type="term" value="F:hormone activity"/>
    <property type="evidence" value="ECO:0007669"/>
    <property type="project" value="UniProtKB-KW"/>
</dbReference>
<dbReference type="GO" id="GO:0007186">
    <property type="term" value="P:G protein-coupled receptor signaling pathway"/>
    <property type="evidence" value="ECO:0007669"/>
    <property type="project" value="TreeGrafter"/>
</dbReference>
<dbReference type="CDD" id="cd00069">
    <property type="entry name" value="GHB_like"/>
    <property type="match status" value="1"/>
</dbReference>
<dbReference type="Gene3D" id="2.10.90.10">
    <property type="entry name" value="Cystine-knot cytokines"/>
    <property type="match status" value="1"/>
</dbReference>
<dbReference type="InterPro" id="IPR029034">
    <property type="entry name" value="Cystine-knot_cytokine"/>
</dbReference>
<dbReference type="InterPro" id="IPR006208">
    <property type="entry name" value="Glyco_hormone_CN"/>
</dbReference>
<dbReference type="InterPro" id="IPR001545">
    <property type="entry name" value="Gonadotropin_bsu"/>
</dbReference>
<dbReference type="InterPro" id="IPR018245">
    <property type="entry name" value="Gonadotropin_bsu_CS"/>
</dbReference>
<dbReference type="PANTHER" id="PTHR11515">
    <property type="entry name" value="GLYCOPROTEIN HORMONE BETA CHAIN"/>
    <property type="match status" value="1"/>
</dbReference>
<dbReference type="PANTHER" id="PTHR11515:SF11">
    <property type="entry name" value="LUTROPIN SUBUNIT BETA"/>
    <property type="match status" value="1"/>
</dbReference>
<dbReference type="Pfam" id="PF00007">
    <property type="entry name" value="Cys_knot"/>
    <property type="match status" value="1"/>
</dbReference>
<dbReference type="SMART" id="SM00068">
    <property type="entry name" value="GHB"/>
    <property type="match status" value="1"/>
</dbReference>
<dbReference type="SUPFAM" id="SSF57501">
    <property type="entry name" value="Cystine-knot cytokines"/>
    <property type="match status" value="1"/>
</dbReference>
<dbReference type="PROSITE" id="PS00689">
    <property type="entry name" value="GLYCO_HORMONE_BETA_2"/>
    <property type="match status" value="1"/>
</dbReference>
<evidence type="ECO:0000250" key="1"/>
<evidence type="ECO:0000255" key="2"/>
<evidence type="ECO:0000305" key="3"/>
<organism>
    <name type="scientific">Fundulus heteroclitus</name>
    <name type="common">Killifish</name>
    <name type="synonym">Mummichog</name>
    <dbReference type="NCBI Taxonomy" id="8078"/>
    <lineage>
        <taxon>Eukaryota</taxon>
        <taxon>Metazoa</taxon>
        <taxon>Chordata</taxon>
        <taxon>Craniata</taxon>
        <taxon>Vertebrata</taxon>
        <taxon>Euteleostomi</taxon>
        <taxon>Actinopterygii</taxon>
        <taxon>Neopterygii</taxon>
        <taxon>Teleostei</taxon>
        <taxon>Neoteleostei</taxon>
        <taxon>Acanthomorphata</taxon>
        <taxon>Ovalentaria</taxon>
        <taxon>Atherinomorphae</taxon>
        <taxon>Cyprinodontiformes</taxon>
        <taxon>Fundulidae</taxon>
        <taxon>Fundulus</taxon>
    </lineage>
</organism>
<sequence>MQLVLMAAVLALAEVGCFGCHLKNVSIPMERCGQRVCIHTTICEGLCFSEDAVFESPDEAPEHRVCNGDWSYEVKHIQGCPESITYPVATNCYCSACNTKDTYCTRLYAHIPSC</sequence>